<comment type="function">
    <text evidence="4">Probable neurotoxin.</text>
</comment>
<comment type="subcellular location">
    <subcellularLocation>
        <location evidence="2">Secreted</location>
    </subcellularLocation>
</comment>
<comment type="tissue specificity">
    <text evidence="5">Expressed by the venom duct.</text>
</comment>
<comment type="domain">
    <text evidence="4">The cysteine framework is C-C-CC-CC-C-C-C-C.</text>
</comment>
<comment type="PTM">
    <text evidence="4">Contains 5 disulfide bonds.</text>
</comment>
<comment type="similarity">
    <text evidence="4">Belongs to the conotoxin N superfamily.</text>
</comment>
<dbReference type="EMBL" id="KT377410">
    <property type="protein sequence ID" value="AME17674.1"/>
    <property type="molecule type" value="mRNA"/>
</dbReference>
<dbReference type="GO" id="GO:0005576">
    <property type="term" value="C:extracellular region"/>
    <property type="evidence" value="ECO:0007669"/>
    <property type="project" value="UniProtKB-SubCell"/>
</dbReference>
<dbReference type="GO" id="GO:0090729">
    <property type="term" value="F:toxin activity"/>
    <property type="evidence" value="ECO:0007669"/>
    <property type="project" value="UniProtKB-KW"/>
</dbReference>
<accession>A0A125S9F0</accession>
<feature type="signal peptide" evidence="1">
    <location>
        <begin position="1"/>
        <end position="21"/>
    </location>
</feature>
<feature type="propeptide" id="PRO_0000450993" evidence="4">
    <location>
        <begin position="22"/>
        <end position="31"/>
    </location>
</feature>
<feature type="chain" id="PRO_5007179708" description="Conotoxin Im016" evidence="4">
    <location>
        <begin position="32"/>
        <end position="81"/>
    </location>
</feature>
<reference key="1">
    <citation type="journal article" date="2019" name="Mar. Drugs">
        <title>Transcriptomic-proteomic correlation in the predation-evoked venom of the cone snail, Conus imperialis.</title>
        <authorList>
            <person name="Jin A.H."/>
            <person name="Dutertre S."/>
            <person name="Dutt M."/>
            <person name="Lavergne V."/>
            <person name="Jones A."/>
            <person name="Lewis R.J."/>
            <person name="Alewood P.F."/>
        </authorList>
    </citation>
    <scope>NUCLEOTIDE SEQUENCE [MRNA]</scope>
    <scope>IDENTIFICATION BY MASS SPECTROMETRY</scope>
    <scope>SUBCELLULAR LOCATION</scope>
    <source>
        <tissue>Venom</tissue>
        <tissue>Venom duct</tissue>
    </source>
</reference>
<evidence type="ECO:0000255" key="1"/>
<evidence type="ECO:0000269" key="2">
    <source>
    </source>
</evidence>
<evidence type="ECO:0000303" key="3">
    <source>
    </source>
</evidence>
<evidence type="ECO:0000305" key="4"/>
<evidence type="ECO:0000305" key="5">
    <source>
    </source>
</evidence>
<evidence type="ECO:0000312" key="6">
    <source>
        <dbReference type="EMBL" id="AME17674.1"/>
    </source>
</evidence>
<keyword id="KW-1015">Disulfide bond</keyword>
<keyword id="KW-0528">Neurotoxin</keyword>
<keyword id="KW-0964">Secreted</keyword>
<keyword id="KW-0732">Signal</keyword>
<keyword id="KW-0800">Toxin</keyword>
<proteinExistence type="evidence at protein level"/>
<organism>
    <name type="scientific">Conus imperialis</name>
    <name type="common">Imperial cone</name>
    <dbReference type="NCBI Taxonomy" id="35631"/>
    <lineage>
        <taxon>Eukaryota</taxon>
        <taxon>Metazoa</taxon>
        <taxon>Spiralia</taxon>
        <taxon>Lophotrochozoa</taxon>
        <taxon>Mollusca</taxon>
        <taxon>Gastropoda</taxon>
        <taxon>Caenogastropoda</taxon>
        <taxon>Neogastropoda</taxon>
        <taxon>Conoidea</taxon>
        <taxon>Conidae</taxon>
        <taxon>Conus</taxon>
        <taxon>Stephanoconus</taxon>
    </lineage>
</organism>
<sequence>MSTLGMMLLILLLLVPLATFADDGPTMRGHRSAKLLAHTTRDSCPSGTNCPSKICCNGNCCSKSSCRCETNQATKERVCVC</sequence>
<protein>
    <recommendedName>
        <fullName evidence="4">Conotoxin Im016</fullName>
    </recommendedName>
    <alternativeName>
        <fullName evidence="3 6">Conopeptide im016</fullName>
    </alternativeName>
</protein>
<name>CNG_CONIM</name>